<sequence length="268" mass="29169">MDFFNLLEAAFLGLIEGLTEFIPVSSTGHLLLIGHFLGFESTGKTFEVLIQLGAILAILSVYSAKLARIATDFPRDARTRRFVLGVLVAFLPAAVIGALAHGFIKGVLFETPMLVCIMLIVGGFILLWVDQLNLRPRYHNVMDYPLPICLAIGFIQCLAMIPGVSRSGSTIVGSLLLGADKRSAAEFSFFLAMPTMAGAFAYDLFKSRNILSFNDGALIVVGFIMAFISGVFVVRHLLDYVSRHGFALFGWWRLIVGSAGMAALIIWG</sequence>
<protein>
    <recommendedName>
        <fullName evidence="1">Undecaprenyl-diphosphatase</fullName>
        <ecNumber evidence="1">3.6.1.27</ecNumber>
    </recommendedName>
    <alternativeName>
        <fullName evidence="1">Bacitracin resistance protein</fullName>
    </alternativeName>
    <alternativeName>
        <fullName evidence="1">Undecaprenyl pyrophosphate phosphatase</fullName>
    </alternativeName>
</protein>
<proteinExistence type="inferred from homology"/>
<gene>
    <name evidence="1" type="primary">uppP</name>
    <name type="ordered locus">BMEA_B1027</name>
</gene>
<feature type="chain" id="PRO_1000148803" description="Undecaprenyl-diphosphatase">
    <location>
        <begin position="1"/>
        <end position="268"/>
    </location>
</feature>
<feature type="transmembrane region" description="Helical" evidence="1">
    <location>
        <begin position="3"/>
        <end position="23"/>
    </location>
</feature>
<feature type="transmembrane region" description="Helical" evidence="1">
    <location>
        <begin position="46"/>
        <end position="66"/>
    </location>
</feature>
<feature type="transmembrane region" description="Helical" evidence="1">
    <location>
        <begin position="84"/>
        <end position="104"/>
    </location>
</feature>
<feature type="transmembrane region" description="Helical" evidence="1">
    <location>
        <begin position="107"/>
        <end position="127"/>
    </location>
</feature>
<feature type="transmembrane region" description="Helical" evidence="1">
    <location>
        <begin position="144"/>
        <end position="164"/>
    </location>
</feature>
<feature type="transmembrane region" description="Helical" evidence="1">
    <location>
        <begin position="185"/>
        <end position="205"/>
    </location>
</feature>
<feature type="transmembrane region" description="Helical" evidence="1">
    <location>
        <begin position="213"/>
        <end position="233"/>
    </location>
</feature>
<feature type="transmembrane region" description="Helical" evidence="1">
    <location>
        <begin position="246"/>
        <end position="266"/>
    </location>
</feature>
<accession>C0RMI1</accession>
<organism>
    <name type="scientific">Brucella melitensis biotype 2 (strain ATCC 23457)</name>
    <dbReference type="NCBI Taxonomy" id="546272"/>
    <lineage>
        <taxon>Bacteria</taxon>
        <taxon>Pseudomonadati</taxon>
        <taxon>Pseudomonadota</taxon>
        <taxon>Alphaproteobacteria</taxon>
        <taxon>Hyphomicrobiales</taxon>
        <taxon>Brucellaceae</taxon>
        <taxon>Brucella/Ochrobactrum group</taxon>
        <taxon>Brucella</taxon>
    </lineage>
</organism>
<dbReference type="EC" id="3.6.1.27" evidence="1"/>
<dbReference type="EMBL" id="CP001489">
    <property type="protein sequence ID" value="ACO02814.1"/>
    <property type="molecule type" value="Genomic_DNA"/>
</dbReference>
<dbReference type="RefSeq" id="WP_002965610.1">
    <property type="nucleotide sequence ID" value="NC_012442.1"/>
</dbReference>
<dbReference type="SMR" id="C0RMI1"/>
<dbReference type="KEGG" id="bmi:BMEA_B1027"/>
<dbReference type="HOGENOM" id="CLU_060296_2_0_5"/>
<dbReference type="Proteomes" id="UP000001748">
    <property type="component" value="Chromosome II"/>
</dbReference>
<dbReference type="GO" id="GO:0005886">
    <property type="term" value="C:plasma membrane"/>
    <property type="evidence" value="ECO:0007669"/>
    <property type="project" value="UniProtKB-SubCell"/>
</dbReference>
<dbReference type="GO" id="GO:0050380">
    <property type="term" value="F:undecaprenyl-diphosphatase activity"/>
    <property type="evidence" value="ECO:0007669"/>
    <property type="project" value="UniProtKB-UniRule"/>
</dbReference>
<dbReference type="GO" id="GO:0071555">
    <property type="term" value="P:cell wall organization"/>
    <property type="evidence" value="ECO:0007669"/>
    <property type="project" value="UniProtKB-KW"/>
</dbReference>
<dbReference type="GO" id="GO:0009252">
    <property type="term" value="P:peptidoglycan biosynthetic process"/>
    <property type="evidence" value="ECO:0007669"/>
    <property type="project" value="UniProtKB-KW"/>
</dbReference>
<dbReference type="GO" id="GO:0008360">
    <property type="term" value="P:regulation of cell shape"/>
    <property type="evidence" value="ECO:0007669"/>
    <property type="project" value="UniProtKB-KW"/>
</dbReference>
<dbReference type="GO" id="GO:0046677">
    <property type="term" value="P:response to antibiotic"/>
    <property type="evidence" value="ECO:0007669"/>
    <property type="project" value="UniProtKB-UniRule"/>
</dbReference>
<dbReference type="HAMAP" id="MF_01006">
    <property type="entry name" value="Undec_diphosphatase"/>
    <property type="match status" value="1"/>
</dbReference>
<dbReference type="InterPro" id="IPR003824">
    <property type="entry name" value="UppP"/>
</dbReference>
<dbReference type="NCBIfam" id="NF001389">
    <property type="entry name" value="PRK00281.1-2"/>
    <property type="match status" value="1"/>
</dbReference>
<dbReference type="NCBIfam" id="TIGR00753">
    <property type="entry name" value="undec_PP_bacA"/>
    <property type="match status" value="1"/>
</dbReference>
<dbReference type="PANTHER" id="PTHR30622">
    <property type="entry name" value="UNDECAPRENYL-DIPHOSPHATASE"/>
    <property type="match status" value="1"/>
</dbReference>
<dbReference type="PANTHER" id="PTHR30622:SF3">
    <property type="entry name" value="UNDECAPRENYL-DIPHOSPHATASE"/>
    <property type="match status" value="1"/>
</dbReference>
<dbReference type="Pfam" id="PF02673">
    <property type="entry name" value="BacA"/>
    <property type="match status" value="1"/>
</dbReference>
<comment type="function">
    <text evidence="1">Catalyzes the dephosphorylation of undecaprenyl diphosphate (UPP). Confers resistance to bacitracin.</text>
</comment>
<comment type="catalytic activity">
    <reaction evidence="1">
        <text>di-trans,octa-cis-undecaprenyl diphosphate + H2O = di-trans,octa-cis-undecaprenyl phosphate + phosphate + H(+)</text>
        <dbReference type="Rhea" id="RHEA:28094"/>
        <dbReference type="ChEBI" id="CHEBI:15377"/>
        <dbReference type="ChEBI" id="CHEBI:15378"/>
        <dbReference type="ChEBI" id="CHEBI:43474"/>
        <dbReference type="ChEBI" id="CHEBI:58405"/>
        <dbReference type="ChEBI" id="CHEBI:60392"/>
        <dbReference type="EC" id="3.6.1.27"/>
    </reaction>
</comment>
<comment type="subcellular location">
    <subcellularLocation>
        <location evidence="1">Cell inner membrane</location>
        <topology evidence="1">Multi-pass membrane protein</topology>
    </subcellularLocation>
</comment>
<comment type="miscellaneous">
    <text>Bacitracin is thought to be involved in the inhibition of peptidoglycan synthesis by sequestering undecaprenyl diphosphate, thereby reducing the pool of lipid carrier available.</text>
</comment>
<comment type="similarity">
    <text evidence="1">Belongs to the UppP family.</text>
</comment>
<keyword id="KW-0046">Antibiotic resistance</keyword>
<keyword id="KW-0997">Cell inner membrane</keyword>
<keyword id="KW-1003">Cell membrane</keyword>
<keyword id="KW-0133">Cell shape</keyword>
<keyword id="KW-0961">Cell wall biogenesis/degradation</keyword>
<keyword id="KW-0378">Hydrolase</keyword>
<keyword id="KW-0472">Membrane</keyword>
<keyword id="KW-0573">Peptidoglycan synthesis</keyword>
<keyword id="KW-0812">Transmembrane</keyword>
<keyword id="KW-1133">Transmembrane helix</keyword>
<name>UPPP_BRUMB</name>
<evidence type="ECO:0000255" key="1">
    <source>
        <dbReference type="HAMAP-Rule" id="MF_01006"/>
    </source>
</evidence>
<reference key="1">
    <citation type="submission" date="2009-03" db="EMBL/GenBank/DDBJ databases">
        <title>Brucella melitensis ATCC 23457 whole genome shotgun sequencing project.</title>
        <authorList>
            <person name="Setubal J.C."/>
            <person name="Boyle S."/>
            <person name="Crasta O.R."/>
            <person name="Gillespie J.J."/>
            <person name="Kenyon R.W."/>
            <person name="Lu J."/>
            <person name="Mane S."/>
            <person name="Nagrani S."/>
            <person name="Shallom J.M."/>
            <person name="Shallom S."/>
            <person name="Shukla M."/>
            <person name="Snyder E.E."/>
            <person name="Sobral B.W."/>
            <person name="Wattam A.R."/>
            <person name="Will R."/>
            <person name="Williams K."/>
            <person name="Yoo H."/>
            <person name="Munk C."/>
            <person name="Tapia R."/>
            <person name="Han C."/>
            <person name="Detter J.C."/>
            <person name="Bruce D."/>
            <person name="Brettin T.S."/>
        </authorList>
    </citation>
    <scope>NUCLEOTIDE SEQUENCE [LARGE SCALE GENOMIC DNA]</scope>
    <source>
        <strain>ATCC 23457</strain>
    </source>
</reference>